<keyword id="KW-0044">Antibiotic</keyword>
<keyword id="KW-0929">Antimicrobial</keyword>
<keyword id="KW-0211">Defensin</keyword>
<keyword id="KW-1015">Disulfide bond</keyword>
<keyword id="KW-1185">Reference proteome</keyword>
<keyword id="KW-0964">Secreted</keyword>
<keyword id="KW-0732">Signal</keyword>
<evidence type="ECO:0000250" key="1"/>
<evidence type="ECO:0000305" key="2"/>
<comment type="function">
    <text evidence="1">Exhibits antimicrobial activity against Gram-positive and Gram-negative bacteria.</text>
</comment>
<comment type="subcellular location">
    <subcellularLocation>
        <location evidence="1">Secreted</location>
    </subcellularLocation>
</comment>
<comment type="similarity">
    <text evidence="2">Belongs to the beta-defensin family.</text>
</comment>
<organism>
    <name type="scientific">Gorilla gorilla gorilla</name>
    <name type="common">Western lowland gorilla</name>
    <dbReference type="NCBI Taxonomy" id="9595"/>
    <lineage>
        <taxon>Eukaryota</taxon>
        <taxon>Metazoa</taxon>
        <taxon>Chordata</taxon>
        <taxon>Craniata</taxon>
        <taxon>Vertebrata</taxon>
        <taxon>Euteleostomi</taxon>
        <taxon>Mammalia</taxon>
        <taxon>Eutheria</taxon>
        <taxon>Euarchontoglires</taxon>
        <taxon>Primates</taxon>
        <taxon>Haplorrhini</taxon>
        <taxon>Catarrhini</taxon>
        <taxon>Hominidae</taxon>
        <taxon>Gorilla</taxon>
    </lineage>
</organism>
<gene>
    <name type="primary">DEFB103A</name>
    <name type="synonym">DEFB103</name>
</gene>
<sequence>MRIHYLLFTLLFLFLVPVPGHGGIINTLQKYYCRVRGGRCAVLSCLPKEEQIGKCSTRGRKCCRRKK</sequence>
<accession>A4H1Z9</accession>
<protein>
    <recommendedName>
        <fullName>Beta-defensin 103A</fullName>
    </recommendedName>
    <alternativeName>
        <fullName>Defensin, beta 103</fullName>
    </alternativeName>
    <alternativeName>
        <fullName>Defensin, beta 103A</fullName>
    </alternativeName>
</protein>
<feature type="signal peptide" evidence="1">
    <location>
        <begin position="1"/>
        <end position="22"/>
    </location>
</feature>
<feature type="peptide" id="PRO_0000289805" description="Beta-defensin 103A">
    <location>
        <begin position="23"/>
        <end position="67"/>
    </location>
</feature>
<feature type="disulfide bond" evidence="1">
    <location>
        <begin position="33"/>
        <end position="62"/>
    </location>
</feature>
<feature type="disulfide bond" evidence="1">
    <location>
        <begin position="40"/>
        <end position="55"/>
    </location>
</feature>
<feature type="disulfide bond" evidence="1">
    <location>
        <begin position="45"/>
        <end position="63"/>
    </location>
</feature>
<reference key="1">
    <citation type="submission" date="2006-11" db="EMBL/GenBank/DDBJ databases">
        <title>Evolution and sequence variation of human beta-defensin genes.</title>
        <authorList>
            <person name="Hollox E.J."/>
            <person name="Armour J.A.L."/>
        </authorList>
    </citation>
    <scope>NUCLEOTIDE SEQUENCE [GENOMIC DNA]</scope>
</reference>
<dbReference type="EMBL" id="AM410104">
    <property type="protein sequence ID" value="CAL68919.1"/>
    <property type="molecule type" value="Genomic_DNA"/>
</dbReference>
<dbReference type="RefSeq" id="XP_018887588.1">
    <property type="nucleotide sequence ID" value="XM_019032043.1"/>
</dbReference>
<dbReference type="SMR" id="A4H1Z9"/>
<dbReference type="FunCoup" id="A4H1Z9">
    <property type="interactions" value="172"/>
</dbReference>
<dbReference type="STRING" id="9593.ENSGGOP00000036882"/>
<dbReference type="Ensembl" id="ENSGGOT00000058441.1">
    <property type="protein sequence ID" value="ENSGGOP00000036882.1"/>
    <property type="gene ID" value="ENSGGOG00000039785.1"/>
</dbReference>
<dbReference type="Ensembl" id="ENSGGOT00000061036.1">
    <property type="protein sequence ID" value="ENSGGOP00000040509.1"/>
    <property type="gene ID" value="ENSGGOG00000039995.1"/>
</dbReference>
<dbReference type="GeneID" id="101125223"/>
<dbReference type="KEGG" id="ggo:101125223"/>
<dbReference type="eggNOG" id="ENOG502TF5P">
    <property type="taxonomic scope" value="Eukaryota"/>
</dbReference>
<dbReference type="GeneTree" id="ENSGT00530000064280"/>
<dbReference type="HOGENOM" id="CLU_189296_2_0_1"/>
<dbReference type="InParanoid" id="A4H1Z9"/>
<dbReference type="OMA" id="RETQIGH"/>
<dbReference type="OrthoDB" id="9008at9604"/>
<dbReference type="Proteomes" id="UP000001519">
    <property type="component" value="Chromosome 8"/>
</dbReference>
<dbReference type="Bgee" id="ENSGGOG00000039785">
    <property type="expression patterns" value="Expressed in multicellular organism"/>
</dbReference>
<dbReference type="GO" id="GO:0005615">
    <property type="term" value="C:extracellular space"/>
    <property type="evidence" value="ECO:0000318"/>
    <property type="project" value="GO_Central"/>
</dbReference>
<dbReference type="GO" id="GO:0031731">
    <property type="term" value="F:CCR6 chemokine receptor binding"/>
    <property type="evidence" value="ECO:0000318"/>
    <property type="project" value="GO_Central"/>
</dbReference>
<dbReference type="GO" id="GO:0042056">
    <property type="term" value="F:chemoattractant activity"/>
    <property type="evidence" value="ECO:0000318"/>
    <property type="project" value="GO_Central"/>
</dbReference>
<dbReference type="GO" id="GO:0060326">
    <property type="term" value="P:cell chemotaxis"/>
    <property type="evidence" value="ECO:0000318"/>
    <property type="project" value="GO_Central"/>
</dbReference>
<dbReference type="GO" id="GO:0042742">
    <property type="term" value="P:defense response to bacterium"/>
    <property type="evidence" value="ECO:0000318"/>
    <property type="project" value="GO_Central"/>
</dbReference>
<dbReference type="FunFam" id="3.10.360.10:FF:000001">
    <property type="entry name" value="Beta-defensin 1"/>
    <property type="match status" value="1"/>
</dbReference>
<dbReference type="Gene3D" id="3.10.360.10">
    <property type="entry name" value="Antimicrobial Peptide, Beta-defensin 2, Chain A"/>
    <property type="match status" value="1"/>
</dbReference>
<dbReference type="InterPro" id="IPR001855">
    <property type="entry name" value="Defensin_beta-like"/>
</dbReference>
<dbReference type="PANTHER" id="PTHR20515">
    <property type="entry name" value="BETA-DEFENSIN"/>
    <property type="match status" value="1"/>
</dbReference>
<dbReference type="PANTHER" id="PTHR20515:SF0">
    <property type="entry name" value="BETA-DEFENSIN 103"/>
    <property type="match status" value="1"/>
</dbReference>
<dbReference type="Pfam" id="PF00711">
    <property type="entry name" value="Defensin_beta"/>
    <property type="match status" value="1"/>
</dbReference>
<dbReference type="SUPFAM" id="SSF57392">
    <property type="entry name" value="Defensin-like"/>
    <property type="match status" value="1"/>
</dbReference>
<proteinExistence type="inferred from homology"/>
<name>D103A_GORGO</name>